<protein>
    <recommendedName>
        <fullName evidence="1">tRNA pseudouridine synthase A</fullName>
        <ecNumber evidence="1">5.4.99.12</ecNumber>
    </recommendedName>
    <alternativeName>
        <fullName evidence="1">tRNA pseudouridine(38-40) synthase</fullName>
    </alternativeName>
    <alternativeName>
        <fullName evidence="1">tRNA pseudouridylate synthase I</fullName>
    </alternativeName>
    <alternativeName>
        <fullName evidence="1">tRNA-uridine isomerase I</fullName>
    </alternativeName>
</protein>
<sequence>MPRYKLTVEYDGASFVGWQRQKNGLSVQEVIETALLAINGAPVGIRGAGRTDAGVHASAQVAHADLAREWRPDVLRDALNAHMRPALVAVVAAEPVPETFDARFSAIRRHYLYRIINRRAPLTFEAGRAWLVKRRLDARAMHEAAQVLTGRHDFSTFRAAECQAASPIRTLERLDVQAVGDLIEIRASARSFLHHQVRSMVGSLEMVGSGKWSAGDLRAALEACDRRRCGMVAPAAGLYLTGVDYPEEGEEKGAQPFFGE</sequence>
<feature type="chain" id="PRO_1000097718" description="tRNA pseudouridine synthase A">
    <location>
        <begin position="1"/>
        <end position="260"/>
    </location>
</feature>
<feature type="active site" description="Nucleophile" evidence="1">
    <location>
        <position position="52"/>
    </location>
</feature>
<feature type="binding site" evidence="1">
    <location>
        <position position="111"/>
    </location>
    <ligand>
        <name>substrate</name>
    </ligand>
</feature>
<reference key="1">
    <citation type="journal article" date="2010" name="J. Bacteriol.">
        <title>Complete genome sequence of Beijerinckia indica subsp. indica.</title>
        <authorList>
            <person name="Tamas I."/>
            <person name="Dedysh S.N."/>
            <person name="Liesack W."/>
            <person name="Stott M.B."/>
            <person name="Alam M."/>
            <person name="Murrell J.C."/>
            <person name="Dunfield P.F."/>
        </authorList>
    </citation>
    <scope>NUCLEOTIDE SEQUENCE [LARGE SCALE GENOMIC DNA]</scope>
    <source>
        <strain>ATCC 9039 / DSM 1715 / NCIMB 8712</strain>
    </source>
</reference>
<dbReference type="EC" id="5.4.99.12" evidence="1"/>
<dbReference type="EMBL" id="CP001016">
    <property type="protein sequence ID" value="ACB94151.1"/>
    <property type="molecule type" value="Genomic_DNA"/>
</dbReference>
<dbReference type="RefSeq" id="WP_012383509.1">
    <property type="nucleotide sequence ID" value="NC_010581.1"/>
</dbReference>
<dbReference type="SMR" id="B2IEW0"/>
<dbReference type="STRING" id="395963.Bind_0498"/>
<dbReference type="KEGG" id="bid:Bind_0498"/>
<dbReference type="eggNOG" id="COG0101">
    <property type="taxonomic scope" value="Bacteria"/>
</dbReference>
<dbReference type="HOGENOM" id="CLU_014673_0_2_5"/>
<dbReference type="OrthoDB" id="9811823at2"/>
<dbReference type="Proteomes" id="UP000001695">
    <property type="component" value="Chromosome"/>
</dbReference>
<dbReference type="GO" id="GO:0003723">
    <property type="term" value="F:RNA binding"/>
    <property type="evidence" value="ECO:0007669"/>
    <property type="project" value="InterPro"/>
</dbReference>
<dbReference type="GO" id="GO:0160147">
    <property type="term" value="F:tRNA pseudouridine(38-40) synthase activity"/>
    <property type="evidence" value="ECO:0007669"/>
    <property type="project" value="UniProtKB-EC"/>
</dbReference>
<dbReference type="GO" id="GO:0031119">
    <property type="term" value="P:tRNA pseudouridine synthesis"/>
    <property type="evidence" value="ECO:0007669"/>
    <property type="project" value="UniProtKB-UniRule"/>
</dbReference>
<dbReference type="CDD" id="cd02570">
    <property type="entry name" value="PseudoU_synth_EcTruA"/>
    <property type="match status" value="1"/>
</dbReference>
<dbReference type="FunFam" id="3.30.70.580:FF:000001">
    <property type="entry name" value="tRNA pseudouridine synthase A"/>
    <property type="match status" value="1"/>
</dbReference>
<dbReference type="Gene3D" id="3.30.70.660">
    <property type="entry name" value="Pseudouridine synthase I, catalytic domain, C-terminal subdomain"/>
    <property type="match status" value="1"/>
</dbReference>
<dbReference type="Gene3D" id="3.30.70.580">
    <property type="entry name" value="Pseudouridine synthase I, catalytic domain, N-terminal subdomain"/>
    <property type="match status" value="1"/>
</dbReference>
<dbReference type="HAMAP" id="MF_00171">
    <property type="entry name" value="TruA"/>
    <property type="match status" value="1"/>
</dbReference>
<dbReference type="InterPro" id="IPR020103">
    <property type="entry name" value="PsdUridine_synth_cat_dom_sf"/>
</dbReference>
<dbReference type="InterPro" id="IPR001406">
    <property type="entry name" value="PsdUridine_synth_TruA"/>
</dbReference>
<dbReference type="InterPro" id="IPR020097">
    <property type="entry name" value="PsdUridine_synth_TruA_a/b_dom"/>
</dbReference>
<dbReference type="InterPro" id="IPR020095">
    <property type="entry name" value="PsdUridine_synth_TruA_C"/>
</dbReference>
<dbReference type="InterPro" id="IPR020094">
    <property type="entry name" value="TruA/RsuA/RluB/E/F_N"/>
</dbReference>
<dbReference type="NCBIfam" id="TIGR00071">
    <property type="entry name" value="hisT_truA"/>
    <property type="match status" value="1"/>
</dbReference>
<dbReference type="PANTHER" id="PTHR11142">
    <property type="entry name" value="PSEUDOURIDYLATE SYNTHASE"/>
    <property type="match status" value="1"/>
</dbReference>
<dbReference type="PANTHER" id="PTHR11142:SF0">
    <property type="entry name" value="TRNA PSEUDOURIDINE SYNTHASE-LIKE 1"/>
    <property type="match status" value="1"/>
</dbReference>
<dbReference type="Pfam" id="PF01416">
    <property type="entry name" value="PseudoU_synth_1"/>
    <property type="match status" value="2"/>
</dbReference>
<dbReference type="PIRSF" id="PIRSF001430">
    <property type="entry name" value="tRNA_psdUrid_synth"/>
    <property type="match status" value="1"/>
</dbReference>
<dbReference type="SUPFAM" id="SSF55120">
    <property type="entry name" value="Pseudouridine synthase"/>
    <property type="match status" value="1"/>
</dbReference>
<keyword id="KW-0413">Isomerase</keyword>
<keyword id="KW-1185">Reference proteome</keyword>
<keyword id="KW-0819">tRNA processing</keyword>
<organism>
    <name type="scientific">Beijerinckia indica subsp. indica (strain ATCC 9039 / DSM 1715 / NCIMB 8712)</name>
    <dbReference type="NCBI Taxonomy" id="395963"/>
    <lineage>
        <taxon>Bacteria</taxon>
        <taxon>Pseudomonadati</taxon>
        <taxon>Pseudomonadota</taxon>
        <taxon>Alphaproteobacteria</taxon>
        <taxon>Hyphomicrobiales</taxon>
        <taxon>Beijerinckiaceae</taxon>
        <taxon>Beijerinckia</taxon>
    </lineage>
</organism>
<comment type="function">
    <text evidence="1">Formation of pseudouridine at positions 38, 39 and 40 in the anticodon stem and loop of transfer RNAs.</text>
</comment>
<comment type="catalytic activity">
    <reaction evidence="1">
        <text>uridine(38/39/40) in tRNA = pseudouridine(38/39/40) in tRNA</text>
        <dbReference type="Rhea" id="RHEA:22376"/>
        <dbReference type="Rhea" id="RHEA-COMP:10085"/>
        <dbReference type="Rhea" id="RHEA-COMP:10087"/>
        <dbReference type="ChEBI" id="CHEBI:65314"/>
        <dbReference type="ChEBI" id="CHEBI:65315"/>
        <dbReference type="EC" id="5.4.99.12"/>
    </reaction>
</comment>
<comment type="subunit">
    <text evidence="1">Homodimer.</text>
</comment>
<comment type="similarity">
    <text evidence="1">Belongs to the tRNA pseudouridine synthase TruA family.</text>
</comment>
<name>TRUA_BEII9</name>
<evidence type="ECO:0000255" key="1">
    <source>
        <dbReference type="HAMAP-Rule" id="MF_00171"/>
    </source>
</evidence>
<accession>B2IEW0</accession>
<proteinExistence type="inferred from homology"/>
<gene>
    <name evidence="1" type="primary">truA</name>
    <name type="ordered locus">Bind_0498</name>
</gene>